<gene>
    <name type="primary">DOF4.1</name>
    <name type="ordered locus">At4g00940</name>
    <name type="ORF">A_TM018A10.2</name>
    <name type="ORF">T18A10.24</name>
</gene>
<reference key="1">
    <citation type="journal article" date="1999" name="Nature">
        <title>Sequence and analysis of chromosome 4 of the plant Arabidopsis thaliana.</title>
        <authorList>
            <person name="Mayer K.F.X."/>
            <person name="Schueller C."/>
            <person name="Wambutt R."/>
            <person name="Murphy G."/>
            <person name="Volckaert G."/>
            <person name="Pohl T."/>
            <person name="Duesterhoeft A."/>
            <person name="Stiekema W."/>
            <person name="Entian K.-D."/>
            <person name="Terryn N."/>
            <person name="Harris B."/>
            <person name="Ansorge W."/>
            <person name="Brandt P."/>
            <person name="Grivell L.A."/>
            <person name="Rieger M."/>
            <person name="Weichselgartner M."/>
            <person name="de Simone V."/>
            <person name="Obermaier B."/>
            <person name="Mache R."/>
            <person name="Mueller M."/>
            <person name="Kreis M."/>
            <person name="Delseny M."/>
            <person name="Puigdomenech P."/>
            <person name="Watson M."/>
            <person name="Schmidtheini T."/>
            <person name="Reichert B."/>
            <person name="Portetelle D."/>
            <person name="Perez-Alonso M."/>
            <person name="Boutry M."/>
            <person name="Bancroft I."/>
            <person name="Vos P."/>
            <person name="Hoheisel J."/>
            <person name="Zimmermann W."/>
            <person name="Wedler H."/>
            <person name="Ridley P."/>
            <person name="Langham S.-A."/>
            <person name="McCullagh B."/>
            <person name="Bilham L."/>
            <person name="Robben J."/>
            <person name="van der Schueren J."/>
            <person name="Grymonprez B."/>
            <person name="Chuang Y.-J."/>
            <person name="Vandenbussche F."/>
            <person name="Braeken M."/>
            <person name="Weltjens I."/>
            <person name="Voet M."/>
            <person name="Bastiaens I."/>
            <person name="Aert R."/>
            <person name="Defoor E."/>
            <person name="Weitzenegger T."/>
            <person name="Bothe G."/>
            <person name="Ramsperger U."/>
            <person name="Hilbert H."/>
            <person name="Braun M."/>
            <person name="Holzer E."/>
            <person name="Brandt A."/>
            <person name="Peters S."/>
            <person name="van Staveren M."/>
            <person name="Dirkse W."/>
            <person name="Mooijman P."/>
            <person name="Klein Lankhorst R."/>
            <person name="Rose M."/>
            <person name="Hauf J."/>
            <person name="Koetter P."/>
            <person name="Berneiser S."/>
            <person name="Hempel S."/>
            <person name="Feldpausch M."/>
            <person name="Lamberth S."/>
            <person name="Van den Daele H."/>
            <person name="De Keyser A."/>
            <person name="Buysshaert C."/>
            <person name="Gielen J."/>
            <person name="Villarroel R."/>
            <person name="De Clercq R."/>
            <person name="van Montagu M."/>
            <person name="Rogers J."/>
            <person name="Cronin A."/>
            <person name="Quail M.A."/>
            <person name="Bray-Allen S."/>
            <person name="Clark L."/>
            <person name="Doggett J."/>
            <person name="Hall S."/>
            <person name="Kay M."/>
            <person name="Lennard N."/>
            <person name="McLay K."/>
            <person name="Mayes R."/>
            <person name="Pettett A."/>
            <person name="Rajandream M.A."/>
            <person name="Lyne M."/>
            <person name="Benes V."/>
            <person name="Rechmann S."/>
            <person name="Borkova D."/>
            <person name="Bloecker H."/>
            <person name="Scharfe M."/>
            <person name="Grimm M."/>
            <person name="Loehnert T.-H."/>
            <person name="Dose S."/>
            <person name="de Haan M."/>
            <person name="Maarse A.C."/>
            <person name="Schaefer M."/>
            <person name="Mueller-Auer S."/>
            <person name="Gabel C."/>
            <person name="Fuchs M."/>
            <person name="Fartmann B."/>
            <person name="Granderath K."/>
            <person name="Dauner D."/>
            <person name="Herzl A."/>
            <person name="Neumann S."/>
            <person name="Argiriou A."/>
            <person name="Vitale D."/>
            <person name="Liguori R."/>
            <person name="Piravandi E."/>
            <person name="Massenet O."/>
            <person name="Quigley F."/>
            <person name="Clabauld G."/>
            <person name="Muendlein A."/>
            <person name="Felber R."/>
            <person name="Schnabl S."/>
            <person name="Hiller R."/>
            <person name="Schmidt W."/>
            <person name="Lecharny A."/>
            <person name="Aubourg S."/>
            <person name="Chefdor F."/>
            <person name="Cooke R."/>
            <person name="Berger C."/>
            <person name="Monfort A."/>
            <person name="Casacuberta E."/>
            <person name="Gibbons T."/>
            <person name="Weber N."/>
            <person name="Vandenbol M."/>
            <person name="Bargues M."/>
            <person name="Terol J."/>
            <person name="Torres A."/>
            <person name="Perez-Perez A."/>
            <person name="Purnelle B."/>
            <person name="Bent E."/>
            <person name="Johnson S."/>
            <person name="Tacon D."/>
            <person name="Jesse T."/>
            <person name="Heijnen L."/>
            <person name="Schwarz S."/>
            <person name="Scholler P."/>
            <person name="Heber S."/>
            <person name="Francs P."/>
            <person name="Bielke C."/>
            <person name="Frishman D."/>
            <person name="Haase D."/>
            <person name="Lemcke K."/>
            <person name="Mewes H.-W."/>
            <person name="Stocker S."/>
            <person name="Zaccaria P."/>
            <person name="Bevan M."/>
            <person name="Wilson R.K."/>
            <person name="de la Bastide M."/>
            <person name="Habermann K."/>
            <person name="Parnell L."/>
            <person name="Dedhia N."/>
            <person name="Gnoj L."/>
            <person name="Schutz K."/>
            <person name="Huang E."/>
            <person name="Spiegel L."/>
            <person name="Sekhon M."/>
            <person name="Murray J."/>
            <person name="Sheet P."/>
            <person name="Cordes M."/>
            <person name="Abu-Threideh J."/>
            <person name="Stoneking T."/>
            <person name="Kalicki J."/>
            <person name="Graves T."/>
            <person name="Harmon G."/>
            <person name="Edwards J."/>
            <person name="Latreille P."/>
            <person name="Courtney L."/>
            <person name="Cloud J."/>
            <person name="Abbott A."/>
            <person name="Scott K."/>
            <person name="Johnson D."/>
            <person name="Minx P."/>
            <person name="Bentley D."/>
            <person name="Fulton B."/>
            <person name="Miller N."/>
            <person name="Greco T."/>
            <person name="Kemp K."/>
            <person name="Kramer J."/>
            <person name="Fulton L."/>
            <person name="Mardis E."/>
            <person name="Dante M."/>
            <person name="Pepin K."/>
            <person name="Hillier L.W."/>
            <person name="Nelson J."/>
            <person name="Spieth J."/>
            <person name="Ryan E."/>
            <person name="Andrews S."/>
            <person name="Geisel C."/>
            <person name="Layman D."/>
            <person name="Du H."/>
            <person name="Ali J."/>
            <person name="Berghoff A."/>
            <person name="Jones K."/>
            <person name="Drone K."/>
            <person name="Cotton M."/>
            <person name="Joshu C."/>
            <person name="Antonoiu B."/>
            <person name="Zidanic M."/>
            <person name="Strong C."/>
            <person name="Sun H."/>
            <person name="Lamar B."/>
            <person name="Yordan C."/>
            <person name="Ma P."/>
            <person name="Zhong J."/>
            <person name="Preston R."/>
            <person name="Vil D."/>
            <person name="Shekher M."/>
            <person name="Matero A."/>
            <person name="Shah R."/>
            <person name="Swaby I.K."/>
            <person name="O'Shaughnessy A."/>
            <person name="Rodriguez M."/>
            <person name="Hoffman J."/>
            <person name="Till S."/>
            <person name="Granat S."/>
            <person name="Shohdy N."/>
            <person name="Hasegawa A."/>
            <person name="Hameed A."/>
            <person name="Lodhi M."/>
            <person name="Johnson A."/>
            <person name="Chen E."/>
            <person name="Marra M.A."/>
            <person name="Martienssen R."/>
            <person name="McCombie W.R."/>
        </authorList>
    </citation>
    <scope>NUCLEOTIDE SEQUENCE [LARGE SCALE GENOMIC DNA]</scope>
    <source>
        <strain>cv. Columbia</strain>
    </source>
</reference>
<reference key="2">
    <citation type="journal article" date="2017" name="Plant J.">
        <title>Araport11: a complete reannotation of the Arabidopsis thaliana reference genome.</title>
        <authorList>
            <person name="Cheng C.Y."/>
            <person name="Krishnakumar V."/>
            <person name="Chan A.P."/>
            <person name="Thibaud-Nissen F."/>
            <person name="Schobel S."/>
            <person name="Town C.D."/>
        </authorList>
    </citation>
    <scope>GENOME REANNOTATION</scope>
    <source>
        <strain>cv. Columbia</strain>
    </source>
</reference>
<reference key="3">
    <citation type="submission" date="2009-03" db="EMBL/GenBank/DDBJ databases">
        <title>ORF cloning and analysis of Arabidopsis transcription factor genes.</title>
        <authorList>
            <person name="Fujita M."/>
            <person name="Mizukado S."/>
            <person name="Seki M."/>
            <person name="Shinozaki K."/>
            <person name="Mitsuda N."/>
            <person name="Takiguchi Y."/>
            <person name="Takagi M."/>
        </authorList>
    </citation>
    <scope>NUCLEOTIDE SEQUENCE [LARGE SCALE MRNA] OF 17-294</scope>
</reference>
<reference key="4">
    <citation type="journal article" date="2002" name="Trends Plant Sci.">
        <title>The Dof family of plant transcription factors.</title>
        <authorList>
            <person name="Yanagisawa S."/>
        </authorList>
    </citation>
    <scope>GENE FAMILY</scope>
    <scope>NOMENCLATURE</scope>
</reference>
<protein>
    <recommendedName>
        <fullName>Dof zinc finger protein DOF4.1</fullName>
        <shortName>AtDOF4.1</shortName>
    </recommendedName>
</protein>
<sequence length="294" mass="33390">MDHHQYHHHDQYQHQMMTSTNNNSYNTIVTTQPPPTTTTMDSTTATTMIMDDEKKLMTTMSTRPQEPRNCPRCNSSNTKFCYYNNYSLAQPRYLCKSCRRYWTEGGSLRNVPVGGGSRKNKKLPFPNSSTSSSTKNLPDLNPPFVFTSSASSSNPSKTHQNNNDLSLSFSSPMQDKRAQGHYGHFSEQVVTGGQNCLFQAPMGMIQFRQEYDHEHPKKNLGFSLDRNEEEIGNHDNFVVNEEGSKMMYPYGDHEDRQQHHHVRHDDGNKKREGGSSNELWSGIILGGDSGGPTW</sequence>
<organism>
    <name type="scientific">Arabidopsis thaliana</name>
    <name type="common">Mouse-ear cress</name>
    <dbReference type="NCBI Taxonomy" id="3702"/>
    <lineage>
        <taxon>Eukaryota</taxon>
        <taxon>Viridiplantae</taxon>
        <taxon>Streptophyta</taxon>
        <taxon>Embryophyta</taxon>
        <taxon>Tracheophyta</taxon>
        <taxon>Spermatophyta</taxon>
        <taxon>Magnoliopsida</taxon>
        <taxon>eudicotyledons</taxon>
        <taxon>Gunneridae</taxon>
        <taxon>Pentapetalae</taxon>
        <taxon>rosids</taxon>
        <taxon>malvids</taxon>
        <taxon>Brassicales</taxon>
        <taxon>Brassicaceae</taxon>
        <taxon>Camelineae</taxon>
        <taxon>Arabidopsis</taxon>
    </lineage>
</organism>
<accession>Q9M161</accession>
<accession>C0SVG3</accession>
<accession>O23083</accession>
<feature type="chain" id="PRO_0000074284" description="Dof zinc finger protein DOF4.1">
    <location>
        <begin position="1"/>
        <end position="294"/>
    </location>
</feature>
<feature type="zinc finger region" description="Dof-type" evidence="2">
    <location>
        <begin position="68"/>
        <end position="122"/>
    </location>
</feature>
<feature type="region of interest" description="Disordered" evidence="3">
    <location>
        <begin position="109"/>
        <end position="178"/>
    </location>
</feature>
<feature type="region of interest" description="Disordered" evidence="3">
    <location>
        <begin position="247"/>
        <end position="294"/>
    </location>
</feature>
<feature type="compositionally biased region" description="Polar residues" evidence="3">
    <location>
        <begin position="126"/>
        <end position="136"/>
    </location>
</feature>
<feature type="compositionally biased region" description="Polar residues" evidence="3">
    <location>
        <begin position="157"/>
        <end position="173"/>
    </location>
</feature>
<feature type="compositionally biased region" description="Basic and acidic residues" evidence="3">
    <location>
        <begin position="251"/>
        <end position="273"/>
    </location>
</feature>
<feature type="compositionally biased region" description="Gly residues" evidence="3">
    <location>
        <begin position="284"/>
        <end position="294"/>
    </location>
</feature>
<feature type="binding site" evidence="2">
    <location>
        <position position="70"/>
    </location>
    <ligand>
        <name>Zn(2+)</name>
        <dbReference type="ChEBI" id="CHEBI:29105"/>
    </ligand>
</feature>
<feature type="binding site" evidence="2">
    <location>
        <position position="73"/>
    </location>
    <ligand>
        <name>Zn(2+)</name>
        <dbReference type="ChEBI" id="CHEBI:29105"/>
    </ligand>
</feature>
<feature type="binding site" evidence="2">
    <location>
        <position position="95"/>
    </location>
    <ligand>
        <name>Zn(2+)</name>
        <dbReference type="ChEBI" id="CHEBI:29105"/>
    </ligand>
</feature>
<feature type="binding site" evidence="2">
    <location>
        <position position="98"/>
    </location>
    <ligand>
        <name>Zn(2+)</name>
        <dbReference type="ChEBI" id="CHEBI:29105"/>
    </ligand>
</feature>
<keyword id="KW-0238">DNA-binding</keyword>
<keyword id="KW-0479">Metal-binding</keyword>
<keyword id="KW-0539">Nucleus</keyword>
<keyword id="KW-1185">Reference proteome</keyword>
<keyword id="KW-0804">Transcription</keyword>
<keyword id="KW-0805">Transcription regulation</keyword>
<keyword id="KW-0862">Zinc</keyword>
<keyword id="KW-0863">Zinc-finger</keyword>
<name>DOF41_ARATH</name>
<dbReference type="EMBL" id="AF013294">
    <property type="protein sequence ID" value="AAB62848.1"/>
    <property type="status" value="ALT_SEQ"/>
    <property type="molecule type" value="Genomic_DNA"/>
</dbReference>
<dbReference type="EMBL" id="AL161491">
    <property type="protein sequence ID" value="CAB80903.1"/>
    <property type="status" value="ALT_INIT"/>
    <property type="molecule type" value="Genomic_DNA"/>
</dbReference>
<dbReference type="EMBL" id="CP002687">
    <property type="protein sequence ID" value="AEE81958.1"/>
    <property type="molecule type" value="Genomic_DNA"/>
</dbReference>
<dbReference type="EMBL" id="CP002687">
    <property type="protein sequence ID" value="ANM67790.1"/>
    <property type="molecule type" value="Genomic_DNA"/>
</dbReference>
<dbReference type="EMBL" id="CP002687">
    <property type="protein sequence ID" value="ANM67791.1"/>
    <property type="molecule type" value="Genomic_DNA"/>
</dbReference>
<dbReference type="EMBL" id="AB493666">
    <property type="protein sequence ID" value="BAH30504.1"/>
    <property type="molecule type" value="mRNA"/>
</dbReference>
<dbReference type="PIR" id="F85012">
    <property type="entry name" value="F85012"/>
</dbReference>
<dbReference type="PIR" id="T01552">
    <property type="entry name" value="T01552"/>
</dbReference>
<dbReference type="RefSeq" id="NP_001329595.1">
    <property type="nucleotide sequence ID" value="NM_001340283.1"/>
</dbReference>
<dbReference type="RefSeq" id="NP_001329596.1">
    <property type="nucleotide sequence ID" value="NM_001340284.1"/>
</dbReference>
<dbReference type="RefSeq" id="NP_192003.2">
    <property type="nucleotide sequence ID" value="NM_116321.5"/>
</dbReference>
<dbReference type="BioGRID" id="13243">
    <property type="interactions" value="1"/>
</dbReference>
<dbReference type="FunCoup" id="Q9M161">
    <property type="interactions" value="2"/>
</dbReference>
<dbReference type="STRING" id="3702.Q9M161"/>
<dbReference type="iPTMnet" id="Q9M161"/>
<dbReference type="PaxDb" id="3702-AT4G00940.1"/>
<dbReference type="ProteomicsDB" id="222117"/>
<dbReference type="EnsemblPlants" id="AT4G00940.1">
    <property type="protein sequence ID" value="AT4G00940.1"/>
    <property type="gene ID" value="AT4G00940"/>
</dbReference>
<dbReference type="EnsemblPlants" id="AT4G00940.2">
    <property type="protein sequence ID" value="AT4G00940.2"/>
    <property type="gene ID" value="AT4G00940"/>
</dbReference>
<dbReference type="EnsemblPlants" id="AT4G00940.3">
    <property type="protein sequence ID" value="AT4G00940.3"/>
    <property type="gene ID" value="AT4G00940"/>
</dbReference>
<dbReference type="GeneID" id="827952"/>
<dbReference type="Gramene" id="AT4G00940.1">
    <property type="protein sequence ID" value="AT4G00940.1"/>
    <property type="gene ID" value="AT4G00940"/>
</dbReference>
<dbReference type="Gramene" id="AT4G00940.2">
    <property type="protein sequence ID" value="AT4G00940.2"/>
    <property type="gene ID" value="AT4G00940"/>
</dbReference>
<dbReference type="Gramene" id="AT4G00940.3">
    <property type="protein sequence ID" value="AT4G00940.3"/>
    <property type="gene ID" value="AT4G00940"/>
</dbReference>
<dbReference type="KEGG" id="ath:AT4G00940"/>
<dbReference type="Araport" id="AT4G00940"/>
<dbReference type="TAIR" id="AT4G00940">
    <property type="gene designation" value="DOF4.1"/>
</dbReference>
<dbReference type="eggNOG" id="ENOG502REBY">
    <property type="taxonomic scope" value="Eukaryota"/>
</dbReference>
<dbReference type="HOGENOM" id="CLU_036438_5_2_1"/>
<dbReference type="InParanoid" id="Q9M161"/>
<dbReference type="OMA" id="SKLMFPY"/>
<dbReference type="PhylomeDB" id="Q9M161"/>
<dbReference type="PRO" id="PR:Q9M161"/>
<dbReference type="Proteomes" id="UP000006548">
    <property type="component" value="Chromosome 4"/>
</dbReference>
<dbReference type="ExpressionAtlas" id="Q9M161">
    <property type="expression patterns" value="baseline and differential"/>
</dbReference>
<dbReference type="GO" id="GO:0005634">
    <property type="term" value="C:nucleus"/>
    <property type="evidence" value="ECO:0000314"/>
    <property type="project" value="TAIR"/>
</dbReference>
<dbReference type="GO" id="GO:0003700">
    <property type="term" value="F:DNA-binding transcription factor activity"/>
    <property type="evidence" value="ECO:0000250"/>
    <property type="project" value="TAIR"/>
</dbReference>
<dbReference type="GO" id="GO:0000976">
    <property type="term" value="F:transcription cis-regulatory region binding"/>
    <property type="evidence" value="ECO:0000353"/>
    <property type="project" value="TAIR"/>
</dbReference>
<dbReference type="GO" id="GO:0008270">
    <property type="term" value="F:zinc ion binding"/>
    <property type="evidence" value="ECO:0007669"/>
    <property type="project" value="UniProtKB-KW"/>
</dbReference>
<dbReference type="InterPro" id="IPR045174">
    <property type="entry name" value="Dof"/>
</dbReference>
<dbReference type="InterPro" id="IPR003851">
    <property type="entry name" value="Znf_Dof"/>
</dbReference>
<dbReference type="PANTHER" id="PTHR31992">
    <property type="entry name" value="DOF ZINC FINGER PROTEIN DOF1.4-RELATED"/>
    <property type="match status" value="1"/>
</dbReference>
<dbReference type="PANTHER" id="PTHR31992:SF102">
    <property type="entry name" value="DOF ZINC FINGER PROTEIN DOF4.1"/>
    <property type="match status" value="1"/>
</dbReference>
<dbReference type="Pfam" id="PF02701">
    <property type="entry name" value="Zn_ribbon_Dof"/>
    <property type="match status" value="1"/>
</dbReference>
<dbReference type="PROSITE" id="PS01361">
    <property type="entry name" value="ZF_DOF_1"/>
    <property type="match status" value="1"/>
</dbReference>
<dbReference type="PROSITE" id="PS50884">
    <property type="entry name" value="ZF_DOF_2"/>
    <property type="match status" value="1"/>
</dbReference>
<proteinExistence type="evidence at transcript level"/>
<evidence type="ECO:0000250" key="1"/>
<evidence type="ECO:0000255" key="2">
    <source>
        <dbReference type="PROSITE-ProRule" id="PRU00071"/>
    </source>
</evidence>
<evidence type="ECO:0000256" key="3">
    <source>
        <dbReference type="SAM" id="MobiDB-lite"/>
    </source>
</evidence>
<evidence type="ECO:0000305" key="4"/>
<comment type="function">
    <text evidence="1">Transcription factor that binds specifically to a 5'-AA[AG]G-3' consensus core sequence.</text>
</comment>
<comment type="subcellular location">
    <subcellularLocation>
        <location evidence="4">Nucleus</location>
    </subcellularLocation>
</comment>
<comment type="sequence caution" evidence="4">
    <conflict type="erroneous gene model prediction">
        <sequence resource="EMBL-CDS" id="AAB62848"/>
    </conflict>
    <text>The predicted gene At4g00940 has been split into 2 genes: At4g00940 and At4g00950.</text>
</comment>
<comment type="sequence caution" evidence="4">
    <conflict type="erroneous initiation">
        <sequence resource="EMBL-CDS" id="CAB80903"/>
    </conflict>
</comment>